<reference key="1">
    <citation type="journal article" date="1998" name="J. Bacteriol.">
        <title>Molecular characterization and regulation of an operon encoding a system for transport of arginine and ornithine and the ArgR regulatory protein in Pseudomonas aeruginosa.</title>
        <authorList>
            <person name="Nishijyo T."/>
            <person name="Park S.-M."/>
            <person name="Lu C.-D."/>
            <person name="Itoh Y."/>
            <person name="Abdelal A.T."/>
        </authorList>
    </citation>
    <scope>NUCLEOTIDE SEQUENCE [GENOMIC DNA]</scope>
    <source>
        <strain>ATCC 15692 / DSM 22644 / CIP 104116 / JCM 14847 / LMG 12228 / 1C / PRS 101 / PAO1</strain>
    </source>
</reference>
<reference key="2">
    <citation type="journal article" date="2000" name="Nature">
        <title>Complete genome sequence of Pseudomonas aeruginosa PAO1, an opportunistic pathogen.</title>
        <authorList>
            <person name="Stover C.K."/>
            <person name="Pham X.-Q.T."/>
            <person name="Erwin A.L."/>
            <person name="Mizoguchi S.D."/>
            <person name="Warrener P."/>
            <person name="Hickey M.J."/>
            <person name="Brinkman F.S.L."/>
            <person name="Hufnagle W.O."/>
            <person name="Kowalik D.J."/>
            <person name="Lagrou M."/>
            <person name="Garber R.L."/>
            <person name="Goltry L."/>
            <person name="Tolentino E."/>
            <person name="Westbrock-Wadman S."/>
            <person name="Yuan Y."/>
            <person name="Brody L.L."/>
            <person name="Coulter S.N."/>
            <person name="Folger K.R."/>
            <person name="Kas A."/>
            <person name="Larbig K."/>
            <person name="Lim R.M."/>
            <person name="Smith K.A."/>
            <person name="Spencer D.H."/>
            <person name="Wong G.K.-S."/>
            <person name="Wu Z."/>
            <person name="Paulsen I.T."/>
            <person name="Reizer J."/>
            <person name="Saier M.H. Jr."/>
            <person name="Hancock R.E.W."/>
            <person name="Lory S."/>
            <person name="Olson M.V."/>
        </authorList>
    </citation>
    <scope>NUCLEOTIDE SEQUENCE [LARGE SCALE GENOMIC DNA]</scope>
    <source>
        <strain>ATCC 15692 / DSM 22644 / CIP 104116 / JCM 14847 / LMG 12228 / 1C / PRS 101 / PAO1</strain>
    </source>
</reference>
<reference key="3">
    <citation type="journal article" date="1997" name="J. Bacteriol.">
        <title>Cloning and characterization of argR, a gene that participates in regulation of arginine biosynthesis and catabolism in Pseudomonas aeruginosa PAO1.</title>
        <authorList>
            <person name="Park S.-M."/>
            <person name="Lu C.-D."/>
            <person name="Abdelal A.T."/>
        </authorList>
    </citation>
    <scope>NUCLEOTIDE SEQUENCE [GENOMIC DNA] OF 161-254</scope>
    <source>
        <strain>ATCC 15692 / DSM 22644 / CIP 104116 / JCM 14847 / LMG 12228 / 1C / PRS 101 / PAO1</strain>
    </source>
</reference>
<organism>
    <name type="scientific">Pseudomonas aeruginosa (strain ATCC 15692 / DSM 22644 / CIP 104116 / JCM 14847 / LMG 12228 / 1C / PRS 101 / PAO1)</name>
    <dbReference type="NCBI Taxonomy" id="208964"/>
    <lineage>
        <taxon>Bacteria</taxon>
        <taxon>Pseudomonadati</taxon>
        <taxon>Pseudomonadota</taxon>
        <taxon>Gammaproteobacteria</taxon>
        <taxon>Pseudomonadales</taxon>
        <taxon>Pseudomonadaceae</taxon>
        <taxon>Pseudomonas</taxon>
    </lineage>
</organism>
<keyword id="KW-0029">Amino-acid transport</keyword>
<keyword id="KW-0067">ATP-binding</keyword>
<keyword id="KW-0997">Cell inner membrane</keyword>
<keyword id="KW-1003">Cell membrane</keyword>
<keyword id="KW-0472">Membrane</keyword>
<keyword id="KW-0547">Nucleotide-binding</keyword>
<keyword id="KW-1185">Reference proteome</keyword>
<keyword id="KW-0813">Transport</keyword>
<comment type="function">
    <text>Part of the arginine-inducible binding-protein-dependent transport system for arginine and ornithine. Probably responsible for energy coupling to the transport system.</text>
</comment>
<comment type="subcellular location">
    <subcellularLocation>
        <location evidence="2">Cell inner membrane</location>
        <topology evidence="2">Peripheral membrane protein</topology>
    </subcellularLocation>
</comment>
<comment type="similarity">
    <text evidence="2">Belongs to the ABC transporter superfamily.</text>
</comment>
<name>AOTP_PSEAE</name>
<accession>O30506</accession>
<accession>Q9I556</accession>
<gene>
    <name type="primary">aotP</name>
    <name type="ordered locus">PA0892</name>
</gene>
<feature type="chain" id="PRO_0000091930" description="Arginine/ornithine transport ATP-binding protein AotP">
    <location>
        <begin position="1"/>
        <end position="254"/>
    </location>
</feature>
<feature type="domain" description="ABC transporter" evidence="1">
    <location>
        <begin position="4"/>
        <end position="249"/>
    </location>
</feature>
<feature type="binding site" evidence="1">
    <location>
        <begin position="36"/>
        <end position="43"/>
    </location>
    <ligand>
        <name>ATP</name>
        <dbReference type="ChEBI" id="CHEBI:30616"/>
    </ligand>
</feature>
<proteinExistence type="inferred from homology"/>
<protein>
    <recommendedName>
        <fullName>Arginine/ornithine transport ATP-binding protein AotP</fullName>
    </recommendedName>
</protein>
<evidence type="ECO:0000255" key="1">
    <source>
        <dbReference type="PROSITE-ProRule" id="PRU00434"/>
    </source>
</evidence>
<evidence type="ECO:0000305" key="2"/>
<sequence length="254" mass="27956">MYKLEVQDLHKRYGSHEVLKGVSLAAKAGDVISIIGSSGSGKSTFLRCINLLEQPHAGKILLNGEELKLVPGRDGALKAADSRQLQRMRSRLSMVFQHFNLWSHMSALENVIEAPVHVLGVSKKEAIEKAEHYLAKVGVAHRKDAYPAHMSGGEQQRVAIARALAVEPEVMLFDEPTSALDPELVGEVLKVMQDLAQEGRTMVVVTHEMGFAREVSNQLVFLHKGLVEEHGCPKEVLANPQSDRLKQFLSGSLK</sequence>
<dbReference type="EMBL" id="AF012537">
    <property type="protein sequence ID" value="AAC71074.1"/>
    <property type="molecule type" value="Genomic_DNA"/>
</dbReference>
<dbReference type="EMBL" id="AE004091">
    <property type="protein sequence ID" value="AAG04281.1"/>
    <property type="molecule type" value="Genomic_DNA"/>
</dbReference>
<dbReference type="EMBL" id="AF008308">
    <property type="protein sequence ID" value="AAC45652.1"/>
    <property type="molecule type" value="Genomic_DNA"/>
</dbReference>
<dbReference type="PIR" id="T44458">
    <property type="entry name" value="T44458"/>
</dbReference>
<dbReference type="RefSeq" id="NP_249583.1">
    <property type="nucleotide sequence ID" value="NC_002516.2"/>
</dbReference>
<dbReference type="RefSeq" id="WP_003085940.1">
    <property type="nucleotide sequence ID" value="NZ_QZGE01000007.1"/>
</dbReference>
<dbReference type="SMR" id="O30506"/>
<dbReference type="FunCoup" id="O30506">
    <property type="interactions" value="192"/>
</dbReference>
<dbReference type="STRING" id="208964.PA0892"/>
<dbReference type="TCDB" id="3.A.1.3.11">
    <property type="family name" value="the atp-binding cassette (abc) superfamily"/>
</dbReference>
<dbReference type="PaxDb" id="208964-PA0892"/>
<dbReference type="GeneID" id="882247"/>
<dbReference type="KEGG" id="pae:PA0892"/>
<dbReference type="PATRIC" id="fig|208964.12.peg.927"/>
<dbReference type="PseudoCAP" id="PA0892"/>
<dbReference type="HOGENOM" id="CLU_000604_1_22_6"/>
<dbReference type="InParanoid" id="O30506"/>
<dbReference type="OrthoDB" id="9802264at2"/>
<dbReference type="PhylomeDB" id="O30506"/>
<dbReference type="BioCyc" id="PAER208964:G1FZ6-908-MONOMER"/>
<dbReference type="Proteomes" id="UP000002438">
    <property type="component" value="Chromosome"/>
</dbReference>
<dbReference type="GO" id="GO:0005886">
    <property type="term" value="C:plasma membrane"/>
    <property type="evidence" value="ECO:0007669"/>
    <property type="project" value="UniProtKB-SubCell"/>
</dbReference>
<dbReference type="GO" id="GO:0015424">
    <property type="term" value="F:ABC-type amino acid transporter activity"/>
    <property type="evidence" value="ECO:0007669"/>
    <property type="project" value="InterPro"/>
</dbReference>
<dbReference type="GO" id="GO:0005524">
    <property type="term" value="F:ATP binding"/>
    <property type="evidence" value="ECO:0007669"/>
    <property type="project" value="UniProtKB-KW"/>
</dbReference>
<dbReference type="GO" id="GO:0016887">
    <property type="term" value="F:ATP hydrolysis activity"/>
    <property type="evidence" value="ECO:0007669"/>
    <property type="project" value="InterPro"/>
</dbReference>
<dbReference type="CDD" id="cd03262">
    <property type="entry name" value="ABC_HisP_GlnQ"/>
    <property type="match status" value="1"/>
</dbReference>
<dbReference type="FunFam" id="3.40.50.300:FF:000020">
    <property type="entry name" value="Amino acid ABC transporter ATP-binding component"/>
    <property type="match status" value="1"/>
</dbReference>
<dbReference type="Gene3D" id="3.40.50.300">
    <property type="entry name" value="P-loop containing nucleotide triphosphate hydrolases"/>
    <property type="match status" value="1"/>
</dbReference>
<dbReference type="InterPro" id="IPR003593">
    <property type="entry name" value="AAA+_ATPase"/>
</dbReference>
<dbReference type="InterPro" id="IPR030679">
    <property type="entry name" value="ABC_ATPase_HisP-typ"/>
</dbReference>
<dbReference type="InterPro" id="IPR003439">
    <property type="entry name" value="ABC_transporter-like_ATP-bd"/>
</dbReference>
<dbReference type="InterPro" id="IPR017871">
    <property type="entry name" value="ABC_transporter-like_CS"/>
</dbReference>
<dbReference type="InterPro" id="IPR050086">
    <property type="entry name" value="MetN_ABC_transporter-like"/>
</dbReference>
<dbReference type="InterPro" id="IPR027417">
    <property type="entry name" value="P-loop_NTPase"/>
</dbReference>
<dbReference type="PANTHER" id="PTHR43166">
    <property type="entry name" value="AMINO ACID IMPORT ATP-BINDING PROTEIN"/>
    <property type="match status" value="1"/>
</dbReference>
<dbReference type="PANTHER" id="PTHR43166:SF35">
    <property type="entry name" value="L-CYSTINE IMPORT ATP-BINDING PROTEIN TCYN"/>
    <property type="match status" value="1"/>
</dbReference>
<dbReference type="Pfam" id="PF00005">
    <property type="entry name" value="ABC_tran"/>
    <property type="match status" value="1"/>
</dbReference>
<dbReference type="PIRSF" id="PIRSF039085">
    <property type="entry name" value="ABC_ATPase_HisP"/>
    <property type="match status" value="1"/>
</dbReference>
<dbReference type="SMART" id="SM00382">
    <property type="entry name" value="AAA"/>
    <property type="match status" value="1"/>
</dbReference>
<dbReference type="SUPFAM" id="SSF52540">
    <property type="entry name" value="P-loop containing nucleoside triphosphate hydrolases"/>
    <property type="match status" value="1"/>
</dbReference>
<dbReference type="PROSITE" id="PS00211">
    <property type="entry name" value="ABC_TRANSPORTER_1"/>
    <property type="match status" value="1"/>
</dbReference>
<dbReference type="PROSITE" id="PS50893">
    <property type="entry name" value="ABC_TRANSPORTER_2"/>
    <property type="match status" value="1"/>
</dbReference>